<protein>
    <recommendedName>
        <fullName>Protein TonB</fullName>
    </recommendedName>
</protein>
<proteinExistence type="inferred from homology"/>
<gene>
    <name type="primary">tonB</name>
</gene>
<organism>
    <name type="scientific">Campylobacter coli</name>
    <dbReference type="NCBI Taxonomy" id="195"/>
    <lineage>
        <taxon>Bacteria</taxon>
        <taxon>Pseudomonadati</taxon>
        <taxon>Campylobacterota</taxon>
        <taxon>Epsilonproteobacteria</taxon>
        <taxon>Campylobacterales</taxon>
        <taxon>Campylobacteraceae</taxon>
        <taxon>Campylobacter</taxon>
    </lineage>
</organism>
<comment type="function">
    <text evidence="1">Interacts with outer membrane receptor proteins that carry out high-affinity binding and energy dependent uptake into the periplasmic space of specific substrates. It could act to transduce energy from the cytoplasmic membrane to specific energy-requiring processes in the outer membrane, resulting in the release into the periplasm of ligands bound by these outer membrane proteins (By similarity).</text>
</comment>
<comment type="subcellular location">
    <subcellularLocation>
        <location evidence="1">Cell inner membrane</location>
        <topology evidence="1">Single-pass membrane protein</topology>
        <orientation evidence="1">Periplasmic side</orientation>
    </subcellularLocation>
</comment>
<comment type="similarity">
    <text evidence="5">Belongs to the TonB family.</text>
</comment>
<name>TONB_CAMCO</name>
<feature type="chain" id="PRO_0000196193" description="Protein TonB">
    <location>
        <begin position="1"/>
        <end position="232"/>
    </location>
</feature>
<feature type="topological domain" description="Cytoplasmic" evidence="2">
    <location>
        <begin position="1"/>
        <end position="12"/>
    </location>
</feature>
<feature type="transmembrane region" description="Helical; Signal-anchor" evidence="2">
    <location>
        <begin position="13"/>
        <end position="29"/>
    </location>
</feature>
<feature type="topological domain" description="Periplasmic" evidence="2">
    <location>
        <begin position="30"/>
        <end position="232"/>
    </location>
</feature>
<feature type="domain" description="TonB C-terminal" evidence="3">
    <location>
        <begin position="145"/>
        <end position="232"/>
    </location>
</feature>
<feature type="region of interest" description="Disordered" evidence="4">
    <location>
        <begin position="59"/>
        <end position="82"/>
    </location>
</feature>
<feature type="compositionally biased region" description="Polar residues" evidence="4">
    <location>
        <begin position="59"/>
        <end position="77"/>
    </location>
</feature>
<dbReference type="EMBL" id="U80812">
    <property type="protein sequence ID" value="AAC45420.1"/>
    <property type="molecule type" value="Genomic_DNA"/>
</dbReference>
<dbReference type="RefSeq" id="WP_002837894.1">
    <property type="nucleotide sequence ID" value="NZ_UIGL01000002.1"/>
</dbReference>
<dbReference type="SMR" id="O07650"/>
<dbReference type="STRING" id="195.ATE51_02140"/>
<dbReference type="GO" id="GO:0098797">
    <property type="term" value="C:plasma membrane protein complex"/>
    <property type="evidence" value="ECO:0007669"/>
    <property type="project" value="TreeGrafter"/>
</dbReference>
<dbReference type="GO" id="GO:0031992">
    <property type="term" value="F:energy transducer activity"/>
    <property type="evidence" value="ECO:0007669"/>
    <property type="project" value="TreeGrafter"/>
</dbReference>
<dbReference type="GO" id="GO:0015031">
    <property type="term" value="P:protein transport"/>
    <property type="evidence" value="ECO:0007669"/>
    <property type="project" value="UniProtKB-KW"/>
</dbReference>
<dbReference type="GO" id="GO:0055085">
    <property type="term" value="P:transmembrane transport"/>
    <property type="evidence" value="ECO:0007669"/>
    <property type="project" value="InterPro"/>
</dbReference>
<dbReference type="Gene3D" id="3.30.1150.10">
    <property type="match status" value="1"/>
</dbReference>
<dbReference type="InterPro" id="IPR051045">
    <property type="entry name" value="TonB-dependent_transducer"/>
</dbReference>
<dbReference type="InterPro" id="IPR006260">
    <property type="entry name" value="TonB/TolA_C"/>
</dbReference>
<dbReference type="InterPro" id="IPR037682">
    <property type="entry name" value="TonB_C"/>
</dbReference>
<dbReference type="NCBIfam" id="TIGR01352">
    <property type="entry name" value="tonB_Cterm"/>
    <property type="match status" value="1"/>
</dbReference>
<dbReference type="PANTHER" id="PTHR33446:SF2">
    <property type="entry name" value="PROTEIN TONB"/>
    <property type="match status" value="1"/>
</dbReference>
<dbReference type="PANTHER" id="PTHR33446">
    <property type="entry name" value="PROTEIN TONB-RELATED"/>
    <property type="match status" value="1"/>
</dbReference>
<dbReference type="Pfam" id="PF03544">
    <property type="entry name" value="TonB_C"/>
    <property type="match status" value="1"/>
</dbReference>
<dbReference type="SUPFAM" id="SSF74653">
    <property type="entry name" value="TolA/TonB C-terminal domain"/>
    <property type="match status" value="1"/>
</dbReference>
<dbReference type="PROSITE" id="PS52015">
    <property type="entry name" value="TONB_CTD"/>
    <property type="match status" value="1"/>
</dbReference>
<evidence type="ECO:0000250" key="1"/>
<evidence type="ECO:0000255" key="2"/>
<evidence type="ECO:0000255" key="3">
    <source>
        <dbReference type="PROSITE-ProRule" id="PRU01359"/>
    </source>
</evidence>
<evidence type="ECO:0000256" key="4">
    <source>
        <dbReference type="SAM" id="MobiDB-lite"/>
    </source>
</evidence>
<evidence type="ECO:0000305" key="5"/>
<sequence length="232" mass="26992">MKTFISNHKNQSSFITLFVFTPLFFVFLYSKDFLHIQPNETIKENKFNMAIKHFVQNSSDMKPTQPTQTIQEPSNVQPKEPVQEIKKIKPRKEKLIAKPKKIIPPANAKAISQPKKDTNMQQPIMQQQTPQASSYQSVALTSNSEFLKEIKSAIDEALIYPRQARKMRMSGEVLVEFTWTKEKKLENLKILKPSKYDFLNKSALETIRIASKKFPQYEKTFHIKIPLVYKLS</sequence>
<reference key="1">
    <citation type="journal article" date="1997" name="J. Bacteriol.">
        <title>A genetic locus involved in iron utilization unique to some Campylobacter strains.</title>
        <authorList>
            <person name="Guerry P."/>
            <person name="Perez-Casal J."/>
            <person name="Yao R."/>
            <person name="McVeigh A."/>
            <person name="Trust T.J."/>
        </authorList>
    </citation>
    <scope>NUCLEOTIDE SEQUENCE [GENOMIC DNA]</scope>
    <source>
        <strain>VC167</strain>
    </source>
</reference>
<keyword id="KW-0997">Cell inner membrane</keyword>
<keyword id="KW-1003">Cell membrane</keyword>
<keyword id="KW-0472">Membrane</keyword>
<keyword id="KW-0653">Protein transport</keyword>
<keyword id="KW-0735">Signal-anchor</keyword>
<keyword id="KW-0812">Transmembrane</keyword>
<keyword id="KW-1133">Transmembrane helix</keyword>
<keyword id="KW-0813">Transport</keyword>
<accession>O07650</accession>